<proteinExistence type="inferred from homology"/>
<name>BIOF_PSEPW</name>
<comment type="function">
    <text evidence="1">Catalyzes the decarboxylative condensation of pimeloyl-[acyl-carrier protein] and L-alanine to produce 8-amino-7-oxononanoate (AON), [acyl-carrier protein], and carbon dioxide.</text>
</comment>
<comment type="catalytic activity">
    <reaction evidence="1">
        <text>6-carboxyhexanoyl-[ACP] + L-alanine + H(+) = (8S)-8-amino-7-oxononanoate + holo-[ACP] + CO2</text>
        <dbReference type="Rhea" id="RHEA:42288"/>
        <dbReference type="Rhea" id="RHEA-COMP:9685"/>
        <dbReference type="Rhea" id="RHEA-COMP:9955"/>
        <dbReference type="ChEBI" id="CHEBI:15378"/>
        <dbReference type="ChEBI" id="CHEBI:16526"/>
        <dbReference type="ChEBI" id="CHEBI:57972"/>
        <dbReference type="ChEBI" id="CHEBI:64479"/>
        <dbReference type="ChEBI" id="CHEBI:78846"/>
        <dbReference type="ChEBI" id="CHEBI:149468"/>
        <dbReference type="EC" id="2.3.1.47"/>
    </reaction>
</comment>
<comment type="cofactor">
    <cofactor evidence="1">
        <name>pyridoxal 5'-phosphate</name>
        <dbReference type="ChEBI" id="CHEBI:597326"/>
    </cofactor>
</comment>
<comment type="pathway">
    <text evidence="1">Cofactor biosynthesis; biotin biosynthesis.</text>
</comment>
<comment type="subunit">
    <text evidence="1">Homodimer.</text>
</comment>
<comment type="similarity">
    <text evidence="1">Belongs to the class-II pyridoxal-phosphate-dependent aminotransferase family. BioF subfamily.</text>
</comment>
<organism>
    <name type="scientific">Pseudomonas putida (strain W619)</name>
    <dbReference type="NCBI Taxonomy" id="390235"/>
    <lineage>
        <taxon>Bacteria</taxon>
        <taxon>Pseudomonadati</taxon>
        <taxon>Pseudomonadota</taxon>
        <taxon>Gammaproteobacteria</taxon>
        <taxon>Pseudomonadales</taxon>
        <taxon>Pseudomonadaceae</taxon>
        <taxon>Pseudomonas</taxon>
    </lineage>
</organism>
<dbReference type="EC" id="2.3.1.47" evidence="1"/>
<dbReference type="EMBL" id="CP000949">
    <property type="protein sequence ID" value="ACA75315.1"/>
    <property type="molecule type" value="Genomic_DNA"/>
</dbReference>
<dbReference type="SMR" id="B1JE54"/>
<dbReference type="STRING" id="390235.PputW619_4839"/>
<dbReference type="KEGG" id="ppw:PputW619_4839"/>
<dbReference type="eggNOG" id="COG0156">
    <property type="taxonomic scope" value="Bacteria"/>
</dbReference>
<dbReference type="HOGENOM" id="CLU_015846_11_2_6"/>
<dbReference type="OrthoDB" id="9807157at2"/>
<dbReference type="UniPathway" id="UPA00078"/>
<dbReference type="GO" id="GO:0008710">
    <property type="term" value="F:8-amino-7-oxononanoate synthase activity"/>
    <property type="evidence" value="ECO:0007669"/>
    <property type="project" value="UniProtKB-UniRule"/>
</dbReference>
<dbReference type="GO" id="GO:0030170">
    <property type="term" value="F:pyridoxal phosphate binding"/>
    <property type="evidence" value="ECO:0007669"/>
    <property type="project" value="UniProtKB-UniRule"/>
</dbReference>
<dbReference type="GO" id="GO:0009102">
    <property type="term" value="P:biotin biosynthetic process"/>
    <property type="evidence" value="ECO:0007669"/>
    <property type="project" value="UniProtKB-UniRule"/>
</dbReference>
<dbReference type="CDD" id="cd06454">
    <property type="entry name" value="KBL_like"/>
    <property type="match status" value="1"/>
</dbReference>
<dbReference type="Gene3D" id="3.90.1150.10">
    <property type="entry name" value="Aspartate Aminotransferase, domain 1"/>
    <property type="match status" value="1"/>
</dbReference>
<dbReference type="Gene3D" id="3.40.640.10">
    <property type="entry name" value="Type I PLP-dependent aspartate aminotransferase-like (Major domain)"/>
    <property type="match status" value="1"/>
</dbReference>
<dbReference type="HAMAP" id="MF_01693">
    <property type="entry name" value="BioF_aminotrans_2"/>
    <property type="match status" value="1"/>
</dbReference>
<dbReference type="InterPro" id="IPR004839">
    <property type="entry name" value="Aminotransferase_I/II_large"/>
</dbReference>
<dbReference type="InterPro" id="IPR050087">
    <property type="entry name" value="AON_synthase_class-II"/>
</dbReference>
<dbReference type="InterPro" id="IPR004723">
    <property type="entry name" value="AONS_Archaea/Proteobacteria"/>
</dbReference>
<dbReference type="InterPro" id="IPR022834">
    <property type="entry name" value="AONS_Proteobacteria"/>
</dbReference>
<dbReference type="InterPro" id="IPR015424">
    <property type="entry name" value="PyrdxlP-dep_Trfase"/>
</dbReference>
<dbReference type="InterPro" id="IPR015421">
    <property type="entry name" value="PyrdxlP-dep_Trfase_major"/>
</dbReference>
<dbReference type="InterPro" id="IPR015422">
    <property type="entry name" value="PyrdxlP-dep_Trfase_small"/>
</dbReference>
<dbReference type="NCBIfam" id="TIGR00858">
    <property type="entry name" value="bioF"/>
    <property type="match status" value="1"/>
</dbReference>
<dbReference type="PANTHER" id="PTHR13693:SF100">
    <property type="entry name" value="8-AMINO-7-OXONONANOATE SYNTHASE"/>
    <property type="match status" value="1"/>
</dbReference>
<dbReference type="PANTHER" id="PTHR13693">
    <property type="entry name" value="CLASS II AMINOTRANSFERASE/8-AMINO-7-OXONONANOATE SYNTHASE"/>
    <property type="match status" value="1"/>
</dbReference>
<dbReference type="Pfam" id="PF00155">
    <property type="entry name" value="Aminotran_1_2"/>
    <property type="match status" value="1"/>
</dbReference>
<dbReference type="SUPFAM" id="SSF53383">
    <property type="entry name" value="PLP-dependent transferases"/>
    <property type="match status" value="1"/>
</dbReference>
<sequence length="390" mass="41230">MAFDLAARLAERRAADLYRQRPLLQSPQGPNVVVDGQPLLAFCSNDYLGLANHPEVIAAWQAGAERWGVGGGASHLVVGHSTPHHQVEEALAELTGRPRALLFSTGYMANLGAITALVGQGDTVLQDRLNHASLLDGGLLSGARFNRYLHNDAVSLANRLGKACGNTLVVTDGVFSMDGDLADLPALAEVARARGAWLMVDDAHGLGTLGAHGGGIVEHFGLGIDDVPVLIGTLGKACGTAGAFVAGSDDLIEALVQFARPYIYTTSQPPALACATLKSLELLRRETWRREHLAGLIRQFREGAVQIGLQLMDSPTPIQPILIGDSAQALRLSQMLRERGLLVTAIRPPTVPAGSARLRVTLSAAHSEAQVQLLLNALADCYPQLEAADA</sequence>
<gene>
    <name evidence="1" type="primary">bioF</name>
    <name type="ordered locus">PputW619_4839</name>
</gene>
<reference key="1">
    <citation type="submission" date="2008-02" db="EMBL/GenBank/DDBJ databases">
        <title>Complete sequence of Pseudomonas putida W619.</title>
        <authorList>
            <person name="Copeland A."/>
            <person name="Lucas S."/>
            <person name="Lapidus A."/>
            <person name="Barry K."/>
            <person name="Detter J.C."/>
            <person name="Glavina del Rio T."/>
            <person name="Dalin E."/>
            <person name="Tice H."/>
            <person name="Pitluck S."/>
            <person name="Chain P."/>
            <person name="Malfatti S."/>
            <person name="Shin M."/>
            <person name="Vergez L."/>
            <person name="Schmutz J."/>
            <person name="Larimer F."/>
            <person name="Land M."/>
            <person name="Hauser L."/>
            <person name="Kyrpides N."/>
            <person name="Kim E."/>
            <person name="Taghavi S."/>
            <person name="Vangronsveld D."/>
            <person name="van der Lelie D."/>
            <person name="Richardson P."/>
        </authorList>
    </citation>
    <scope>NUCLEOTIDE SEQUENCE [LARGE SCALE GENOMIC DNA]</scope>
    <source>
        <strain>W619</strain>
    </source>
</reference>
<accession>B1JE54</accession>
<protein>
    <recommendedName>
        <fullName evidence="1">8-amino-7-oxononanoate synthase</fullName>
        <shortName evidence="1">AONS</shortName>
        <ecNumber evidence="1">2.3.1.47</ecNumber>
    </recommendedName>
    <alternativeName>
        <fullName evidence="1">7-keto-8-amino-pelargonic acid synthase</fullName>
        <shortName evidence="1">7-KAP synthase</shortName>
        <shortName evidence="1">KAPA synthase</shortName>
    </alternativeName>
    <alternativeName>
        <fullName evidence="1">8-amino-7-ketopelargonate synthase</fullName>
    </alternativeName>
</protein>
<keyword id="KW-0093">Biotin biosynthesis</keyword>
<keyword id="KW-0663">Pyridoxal phosphate</keyword>
<keyword id="KW-0808">Transferase</keyword>
<feature type="chain" id="PRO_0000381082" description="8-amino-7-oxononanoate synthase">
    <location>
        <begin position="1"/>
        <end position="390"/>
    </location>
</feature>
<feature type="binding site" evidence="1">
    <location>
        <position position="19"/>
    </location>
    <ligand>
        <name>substrate</name>
    </ligand>
</feature>
<feature type="binding site" evidence="1">
    <location>
        <begin position="106"/>
        <end position="107"/>
    </location>
    <ligand>
        <name>pyridoxal 5'-phosphate</name>
        <dbReference type="ChEBI" id="CHEBI:597326"/>
    </ligand>
</feature>
<feature type="binding site" evidence="1">
    <location>
        <position position="131"/>
    </location>
    <ligand>
        <name>substrate</name>
    </ligand>
</feature>
<feature type="binding site" evidence="1">
    <location>
        <position position="176"/>
    </location>
    <ligand>
        <name>pyridoxal 5'-phosphate</name>
        <dbReference type="ChEBI" id="CHEBI:597326"/>
    </ligand>
</feature>
<feature type="binding site" evidence="1">
    <location>
        <position position="204"/>
    </location>
    <ligand>
        <name>pyridoxal 5'-phosphate</name>
        <dbReference type="ChEBI" id="CHEBI:597326"/>
    </ligand>
</feature>
<feature type="binding site" evidence="1">
    <location>
        <position position="233"/>
    </location>
    <ligand>
        <name>pyridoxal 5'-phosphate</name>
        <dbReference type="ChEBI" id="CHEBI:597326"/>
    </ligand>
</feature>
<feature type="binding site" evidence="1">
    <location>
        <position position="350"/>
    </location>
    <ligand>
        <name>substrate</name>
    </ligand>
</feature>
<feature type="modified residue" description="N6-(pyridoxal phosphate)lysine" evidence="1">
    <location>
        <position position="236"/>
    </location>
</feature>
<evidence type="ECO:0000255" key="1">
    <source>
        <dbReference type="HAMAP-Rule" id="MF_01693"/>
    </source>
</evidence>